<name>HEM1_PSYA2</name>
<feature type="chain" id="PRO_1000004676" description="Glutamyl-tRNA reductase">
    <location>
        <begin position="1"/>
        <end position="459"/>
    </location>
</feature>
<feature type="active site" description="Nucleophile" evidence="1">
    <location>
        <position position="48"/>
    </location>
</feature>
<feature type="binding site" evidence="1">
    <location>
        <begin position="47"/>
        <end position="50"/>
    </location>
    <ligand>
        <name>substrate</name>
    </ligand>
</feature>
<feature type="binding site" evidence="1">
    <location>
        <position position="140"/>
    </location>
    <ligand>
        <name>substrate</name>
    </ligand>
</feature>
<feature type="binding site" evidence="1">
    <location>
        <begin position="145"/>
        <end position="147"/>
    </location>
    <ligand>
        <name>substrate</name>
    </ligand>
</feature>
<feature type="binding site" evidence="1">
    <location>
        <position position="151"/>
    </location>
    <ligand>
        <name>substrate</name>
    </ligand>
</feature>
<feature type="binding site" evidence="1">
    <location>
        <begin position="220"/>
        <end position="225"/>
    </location>
    <ligand>
        <name>NADP(+)</name>
        <dbReference type="ChEBI" id="CHEBI:58349"/>
    </ligand>
</feature>
<feature type="site" description="Important for activity" evidence="1">
    <location>
        <position position="130"/>
    </location>
</feature>
<organism>
    <name type="scientific">Psychrobacter arcticus (strain DSM 17307 / VKM B-2377 / 273-4)</name>
    <dbReference type="NCBI Taxonomy" id="259536"/>
    <lineage>
        <taxon>Bacteria</taxon>
        <taxon>Pseudomonadati</taxon>
        <taxon>Pseudomonadota</taxon>
        <taxon>Gammaproteobacteria</taxon>
        <taxon>Moraxellales</taxon>
        <taxon>Moraxellaceae</taxon>
        <taxon>Psychrobacter</taxon>
    </lineage>
</organism>
<comment type="function">
    <text evidence="1">Catalyzes the NADPH-dependent reduction of glutamyl-tRNA(Glu) to glutamate 1-semialdehyde (GSA).</text>
</comment>
<comment type="catalytic activity">
    <reaction evidence="1">
        <text>(S)-4-amino-5-oxopentanoate + tRNA(Glu) + NADP(+) = L-glutamyl-tRNA(Glu) + NADPH + H(+)</text>
        <dbReference type="Rhea" id="RHEA:12344"/>
        <dbReference type="Rhea" id="RHEA-COMP:9663"/>
        <dbReference type="Rhea" id="RHEA-COMP:9680"/>
        <dbReference type="ChEBI" id="CHEBI:15378"/>
        <dbReference type="ChEBI" id="CHEBI:57501"/>
        <dbReference type="ChEBI" id="CHEBI:57783"/>
        <dbReference type="ChEBI" id="CHEBI:58349"/>
        <dbReference type="ChEBI" id="CHEBI:78442"/>
        <dbReference type="ChEBI" id="CHEBI:78520"/>
        <dbReference type="EC" id="1.2.1.70"/>
    </reaction>
</comment>
<comment type="pathway">
    <text evidence="1">Porphyrin-containing compound metabolism; protoporphyrin-IX biosynthesis; 5-aminolevulinate from L-glutamyl-tRNA(Glu): step 1/2.</text>
</comment>
<comment type="subunit">
    <text evidence="1">Homodimer.</text>
</comment>
<comment type="domain">
    <text evidence="1">Possesses an unusual extended V-shaped dimeric structure with each monomer consisting of three distinct domains arranged along a curved 'spinal' alpha-helix. The N-terminal catalytic domain specifically recognizes the glutamate moiety of the substrate. The second domain is the NADPH-binding domain, and the third C-terminal domain is responsible for dimerization.</text>
</comment>
<comment type="miscellaneous">
    <text evidence="1">During catalysis, the active site Cys acts as a nucleophile attacking the alpha-carbonyl group of tRNA-bound glutamate with the formation of a thioester intermediate between enzyme and glutamate, and the concomitant release of tRNA(Glu). The thioester intermediate is finally reduced by direct hydride transfer from NADPH, to form the product GSA.</text>
</comment>
<comment type="similarity">
    <text evidence="1">Belongs to the glutamyl-tRNA reductase family.</text>
</comment>
<accession>Q4FVA9</accession>
<reference key="1">
    <citation type="journal article" date="2010" name="Appl. Environ. Microbiol.">
        <title>The genome sequence of Psychrobacter arcticus 273-4, a psychroactive Siberian permafrost bacterium, reveals mechanisms for adaptation to low-temperature growth.</title>
        <authorList>
            <person name="Ayala-del-Rio H.L."/>
            <person name="Chain P.S."/>
            <person name="Grzymski J.J."/>
            <person name="Ponder M.A."/>
            <person name="Ivanova N."/>
            <person name="Bergholz P.W."/>
            <person name="Di Bartolo G."/>
            <person name="Hauser L."/>
            <person name="Land M."/>
            <person name="Bakermans C."/>
            <person name="Rodrigues D."/>
            <person name="Klappenbach J."/>
            <person name="Zarka D."/>
            <person name="Larimer F."/>
            <person name="Richardson P."/>
            <person name="Murray A."/>
            <person name="Thomashow M."/>
            <person name="Tiedje J.M."/>
        </authorList>
    </citation>
    <scope>NUCLEOTIDE SEQUENCE [LARGE SCALE GENOMIC DNA]</scope>
    <source>
        <strain>DSM 17307 / VKM B-2377 / 273-4</strain>
    </source>
</reference>
<keyword id="KW-0521">NADP</keyword>
<keyword id="KW-0560">Oxidoreductase</keyword>
<keyword id="KW-0627">Porphyrin biosynthesis</keyword>
<keyword id="KW-1185">Reference proteome</keyword>
<proteinExistence type="inferred from homology"/>
<sequence>MRLVVIGVNHKTAPVALRERLALVGDDVNIALAQLQGFSDGSVIVSTCNRTEIYALVPESILSPNTLLASSALSVVESSISLNSSTNISSTIISAHILKIKTWLADFKQLSLDEIDPYLYVHRDMHALTHWLRVAAGLDSMILGEPQILGQIKRAVHLAQDQKALSNQLGWIVDQVFAAAKRVRNETQVGAQAVSLSYAAAKLVTQIFDDLPSRTLLVVAAGEMNRLVAMHIAGLGVGRIIICNRNPERAEALAAELRNPKRQIEVRTLQELPQVLAEADIVSSCSGSMDILIDKTMTLRALKSRRYQPMLMIDLAVPRDIDSTVSRIDDVYLYSVDDLQHVIAGNIEQRRQAAVDAELLVSQLVVEMDRRFQVRQVGKDIQQYRSRTHEQVDKLLQESIAKLQGDNANPEDIMIELTRRLTQNLTHAPSKLMRKAAREGDNELLDFVVSGLQDAHRHH</sequence>
<dbReference type="EC" id="1.2.1.70" evidence="1"/>
<dbReference type="EMBL" id="CP000082">
    <property type="protein sequence ID" value="AAZ18049.1"/>
    <property type="molecule type" value="Genomic_DNA"/>
</dbReference>
<dbReference type="RefSeq" id="WP_011279488.1">
    <property type="nucleotide sequence ID" value="NC_007204.1"/>
</dbReference>
<dbReference type="SMR" id="Q4FVA9"/>
<dbReference type="STRING" id="259536.Psyc_0176"/>
<dbReference type="KEGG" id="par:Psyc_0176"/>
<dbReference type="eggNOG" id="COG0373">
    <property type="taxonomic scope" value="Bacteria"/>
</dbReference>
<dbReference type="HOGENOM" id="CLU_035113_2_2_6"/>
<dbReference type="OrthoDB" id="110209at2"/>
<dbReference type="UniPathway" id="UPA00251">
    <property type="reaction ID" value="UER00316"/>
</dbReference>
<dbReference type="Proteomes" id="UP000000546">
    <property type="component" value="Chromosome"/>
</dbReference>
<dbReference type="GO" id="GO:0008883">
    <property type="term" value="F:glutamyl-tRNA reductase activity"/>
    <property type="evidence" value="ECO:0007669"/>
    <property type="project" value="UniProtKB-UniRule"/>
</dbReference>
<dbReference type="GO" id="GO:0050661">
    <property type="term" value="F:NADP binding"/>
    <property type="evidence" value="ECO:0007669"/>
    <property type="project" value="InterPro"/>
</dbReference>
<dbReference type="GO" id="GO:0019353">
    <property type="term" value="P:protoporphyrinogen IX biosynthetic process from glutamate"/>
    <property type="evidence" value="ECO:0007669"/>
    <property type="project" value="TreeGrafter"/>
</dbReference>
<dbReference type="CDD" id="cd05213">
    <property type="entry name" value="NAD_bind_Glutamyl_tRNA_reduct"/>
    <property type="match status" value="1"/>
</dbReference>
<dbReference type="FunFam" id="3.40.50.720:FF:000031">
    <property type="entry name" value="Glutamyl-tRNA reductase"/>
    <property type="match status" value="1"/>
</dbReference>
<dbReference type="Gene3D" id="3.30.460.30">
    <property type="entry name" value="Glutamyl-tRNA reductase, N-terminal domain"/>
    <property type="match status" value="1"/>
</dbReference>
<dbReference type="Gene3D" id="3.40.50.720">
    <property type="entry name" value="NAD(P)-binding Rossmann-like Domain"/>
    <property type="match status" value="1"/>
</dbReference>
<dbReference type="HAMAP" id="MF_00087">
    <property type="entry name" value="Glu_tRNA_reductase"/>
    <property type="match status" value="1"/>
</dbReference>
<dbReference type="InterPro" id="IPR000343">
    <property type="entry name" value="4pyrrol_synth_GluRdtase"/>
</dbReference>
<dbReference type="InterPro" id="IPR015896">
    <property type="entry name" value="4pyrrol_synth_GluRdtase_dimer"/>
</dbReference>
<dbReference type="InterPro" id="IPR015895">
    <property type="entry name" value="4pyrrol_synth_GluRdtase_N"/>
</dbReference>
<dbReference type="InterPro" id="IPR036453">
    <property type="entry name" value="GluRdtase_dimer_dom_sf"/>
</dbReference>
<dbReference type="InterPro" id="IPR036343">
    <property type="entry name" value="GluRdtase_N_sf"/>
</dbReference>
<dbReference type="InterPro" id="IPR036291">
    <property type="entry name" value="NAD(P)-bd_dom_sf"/>
</dbReference>
<dbReference type="InterPro" id="IPR006151">
    <property type="entry name" value="Shikm_DH/Glu-tRNA_Rdtase"/>
</dbReference>
<dbReference type="NCBIfam" id="TIGR01035">
    <property type="entry name" value="hemA"/>
    <property type="match status" value="1"/>
</dbReference>
<dbReference type="PANTHER" id="PTHR43013">
    <property type="entry name" value="GLUTAMYL-TRNA REDUCTASE"/>
    <property type="match status" value="1"/>
</dbReference>
<dbReference type="PANTHER" id="PTHR43013:SF1">
    <property type="entry name" value="GLUTAMYL-TRNA REDUCTASE"/>
    <property type="match status" value="1"/>
</dbReference>
<dbReference type="Pfam" id="PF00745">
    <property type="entry name" value="GlutR_dimer"/>
    <property type="match status" value="1"/>
</dbReference>
<dbReference type="Pfam" id="PF05201">
    <property type="entry name" value="GlutR_N"/>
    <property type="match status" value="1"/>
</dbReference>
<dbReference type="Pfam" id="PF01488">
    <property type="entry name" value="Shikimate_DH"/>
    <property type="match status" value="1"/>
</dbReference>
<dbReference type="PIRSF" id="PIRSF000445">
    <property type="entry name" value="4pyrrol_synth_GluRdtase"/>
    <property type="match status" value="1"/>
</dbReference>
<dbReference type="SUPFAM" id="SSF69742">
    <property type="entry name" value="Glutamyl tRNA-reductase catalytic, N-terminal domain"/>
    <property type="match status" value="1"/>
</dbReference>
<dbReference type="SUPFAM" id="SSF69075">
    <property type="entry name" value="Glutamyl tRNA-reductase dimerization domain"/>
    <property type="match status" value="1"/>
</dbReference>
<dbReference type="SUPFAM" id="SSF51735">
    <property type="entry name" value="NAD(P)-binding Rossmann-fold domains"/>
    <property type="match status" value="1"/>
</dbReference>
<gene>
    <name evidence="1" type="primary">hemA</name>
    <name type="ordered locus">Psyc_0176</name>
</gene>
<protein>
    <recommendedName>
        <fullName evidence="1">Glutamyl-tRNA reductase</fullName>
        <shortName evidence="1">GluTR</shortName>
        <ecNumber evidence="1">1.2.1.70</ecNumber>
    </recommendedName>
</protein>
<evidence type="ECO:0000255" key="1">
    <source>
        <dbReference type="HAMAP-Rule" id="MF_00087"/>
    </source>
</evidence>